<gene>
    <name evidence="1" type="primary">def</name>
    <name type="ordered locus">Daud_1593</name>
</gene>
<sequence length="154" mass="17368">MAVFQIVQYPDPILREKAREVRKITPQIERLAVNLVDTMRRSGGVGLAAPQIGVSKRVIVVEDPEKNPIVLINPEIVRLEGDKETAEEGCLSVPGVWGQVERRMCLTVRGYNLEGKQVAYLVEGFTARAFQHEIDHLDGIVFLDRATTIYKRKE</sequence>
<keyword id="KW-0378">Hydrolase</keyword>
<keyword id="KW-0408">Iron</keyword>
<keyword id="KW-0479">Metal-binding</keyword>
<keyword id="KW-0648">Protein biosynthesis</keyword>
<keyword id="KW-1185">Reference proteome</keyword>
<reference key="1">
    <citation type="submission" date="2007-10" db="EMBL/GenBank/DDBJ databases">
        <title>Complete sequence of chromosome of Desulforudis audaxviator MP104C.</title>
        <authorList>
            <person name="Copeland A."/>
            <person name="Lucas S."/>
            <person name="Lapidus A."/>
            <person name="Barry K."/>
            <person name="Glavina del Rio T."/>
            <person name="Dalin E."/>
            <person name="Tice H."/>
            <person name="Bruce D."/>
            <person name="Pitluck S."/>
            <person name="Lowry S.R."/>
            <person name="Larimer F."/>
            <person name="Land M.L."/>
            <person name="Hauser L."/>
            <person name="Kyrpides N."/>
            <person name="Ivanova N.N."/>
            <person name="Richardson P."/>
        </authorList>
    </citation>
    <scope>NUCLEOTIDE SEQUENCE [LARGE SCALE GENOMIC DNA]</scope>
    <source>
        <strain>MP104C</strain>
    </source>
</reference>
<protein>
    <recommendedName>
        <fullName evidence="1">Peptide deformylase</fullName>
        <shortName evidence="1">PDF</shortName>
        <ecNumber evidence="1">3.5.1.88</ecNumber>
    </recommendedName>
    <alternativeName>
        <fullName evidence="1">Polypeptide deformylase</fullName>
    </alternativeName>
</protein>
<comment type="function">
    <text evidence="1">Removes the formyl group from the N-terminal Met of newly synthesized proteins. Requires at least a dipeptide for an efficient rate of reaction. N-terminal L-methionine is a prerequisite for activity but the enzyme has broad specificity at other positions.</text>
</comment>
<comment type="catalytic activity">
    <reaction evidence="1">
        <text>N-terminal N-formyl-L-methionyl-[peptide] + H2O = N-terminal L-methionyl-[peptide] + formate</text>
        <dbReference type="Rhea" id="RHEA:24420"/>
        <dbReference type="Rhea" id="RHEA-COMP:10639"/>
        <dbReference type="Rhea" id="RHEA-COMP:10640"/>
        <dbReference type="ChEBI" id="CHEBI:15377"/>
        <dbReference type="ChEBI" id="CHEBI:15740"/>
        <dbReference type="ChEBI" id="CHEBI:49298"/>
        <dbReference type="ChEBI" id="CHEBI:64731"/>
        <dbReference type="EC" id="3.5.1.88"/>
    </reaction>
</comment>
<comment type="cofactor">
    <cofactor evidence="1">
        <name>Fe(2+)</name>
        <dbReference type="ChEBI" id="CHEBI:29033"/>
    </cofactor>
    <text evidence="1">Binds 1 Fe(2+) ion.</text>
</comment>
<comment type="similarity">
    <text evidence="1">Belongs to the polypeptide deformylase family.</text>
</comment>
<evidence type="ECO:0000255" key="1">
    <source>
        <dbReference type="HAMAP-Rule" id="MF_00163"/>
    </source>
</evidence>
<feature type="chain" id="PRO_1000097303" description="Peptide deformylase">
    <location>
        <begin position="1"/>
        <end position="154"/>
    </location>
</feature>
<feature type="active site" evidence="1">
    <location>
        <position position="133"/>
    </location>
</feature>
<feature type="binding site" evidence="1">
    <location>
        <position position="90"/>
    </location>
    <ligand>
        <name>Fe cation</name>
        <dbReference type="ChEBI" id="CHEBI:24875"/>
    </ligand>
</feature>
<feature type="binding site" evidence="1">
    <location>
        <position position="132"/>
    </location>
    <ligand>
        <name>Fe cation</name>
        <dbReference type="ChEBI" id="CHEBI:24875"/>
    </ligand>
</feature>
<feature type="binding site" evidence="1">
    <location>
        <position position="136"/>
    </location>
    <ligand>
        <name>Fe cation</name>
        <dbReference type="ChEBI" id="CHEBI:24875"/>
    </ligand>
</feature>
<dbReference type="EC" id="3.5.1.88" evidence="1"/>
<dbReference type="EMBL" id="CP000860">
    <property type="protein sequence ID" value="ACA60095.1"/>
    <property type="molecule type" value="Genomic_DNA"/>
</dbReference>
<dbReference type="RefSeq" id="WP_012302676.1">
    <property type="nucleotide sequence ID" value="NC_010424.1"/>
</dbReference>
<dbReference type="SMR" id="B1I504"/>
<dbReference type="STRING" id="477974.Daud_1593"/>
<dbReference type="KEGG" id="dau:Daud_1593"/>
<dbReference type="eggNOG" id="COG0242">
    <property type="taxonomic scope" value="Bacteria"/>
</dbReference>
<dbReference type="HOGENOM" id="CLU_061901_4_2_9"/>
<dbReference type="OrthoDB" id="9784988at2"/>
<dbReference type="Proteomes" id="UP000008544">
    <property type="component" value="Chromosome"/>
</dbReference>
<dbReference type="GO" id="GO:0046872">
    <property type="term" value="F:metal ion binding"/>
    <property type="evidence" value="ECO:0007669"/>
    <property type="project" value="UniProtKB-KW"/>
</dbReference>
<dbReference type="GO" id="GO:0042586">
    <property type="term" value="F:peptide deformylase activity"/>
    <property type="evidence" value="ECO:0007669"/>
    <property type="project" value="UniProtKB-UniRule"/>
</dbReference>
<dbReference type="GO" id="GO:0043686">
    <property type="term" value="P:co-translational protein modification"/>
    <property type="evidence" value="ECO:0007669"/>
    <property type="project" value="TreeGrafter"/>
</dbReference>
<dbReference type="GO" id="GO:0006412">
    <property type="term" value="P:translation"/>
    <property type="evidence" value="ECO:0007669"/>
    <property type="project" value="UniProtKB-UniRule"/>
</dbReference>
<dbReference type="CDD" id="cd00487">
    <property type="entry name" value="Pep_deformylase"/>
    <property type="match status" value="1"/>
</dbReference>
<dbReference type="Gene3D" id="3.90.45.10">
    <property type="entry name" value="Peptide deformylase"/>
    <property type="match status" value="1"/>
</dbReference>
<dbReference type="HAMAP" id="MF_00163">
    <property type="entry name" value="Pep_deformylase"/>
    <property type="match status" value="1"/>
</dbReference>
<dbReference type="InterPro" id="IPR023635">
    <property type="entry name" value="Peptide_deformylase"/>
</dbReference>
<dbReference type="InterPro" id="IPR036821">
    <property type="entry name" value="Peptide_deformylase_sf"/>
</dbReference>
<dbReference type="NCBIfam" id="TIGR00079">
    <property type="entry name" value="pept_deformyl"/>
    <property type="match status" value="1"/>
</dbReference>
<dbReference type="NCBIfam" id="NF001159">
    <property type="entry name" value="PRK00150.1-3"/>
    <property type="match status" value="1"/>
</dbReference>
<dbReference type="PANTHER" id="PTHR10458">
    <property type="entry name" value="PEPTIDE DEFORMYLASE"/>
    <property type="match status" value="1"/>
</dbReference>
<dbReference type="PANTHER" id="PTHR10458:SF22">
    <property type="entry name" value="PEPTIDE DEFORMYLASE"/>
    <property type="match status" value="1"/>
</dbReference>
<dbReference type="Pfam" id="PF01327">
    <property type="entry name" value="Pep_deformylase"/>
    <property type="match status" value="1"/>
</dbReference>
<dbReference type="PIRSF" id="PIRSF004749">
    <property type="entry name" value="Pep_def"/>
    <property type="match status" value="1"/>
</dbReference>
<dbReference type="PRINTS" id="PR01576">
    <property type="entry name" value="PDEFORMYLASE"/>
</dbReference>
<dbReference type="SUPFAM" id="SSF56420">
    <property type="entry name" value="Peptide deformylase"/>
    <property type="match status" value="1"/>
</dbReference>
<organism>
    <name type="scientific">Desulforudis audaxviator (strain MP104C)</name>
    <dbReference type="NCBI Taxonomy" id="477974"/>
    <lineage>
        <taxon>Bacteria</taxon>
        <taxon>Bacillati</taxon>
        <taxon>Bacillota</taxon>
        <taxon>Clostridia</taxon>
        <taxon>Thermoanaerobacterales</taxon>
        <taxon>Candidatus Desulforudaceae</taxon>
        <taxon>Candidatus Desulforudis</taxon>
    </lineage>
</organism>
<proteinExistence type="inferred from homology"/>
<accession>B1I504</accession>
<name>DEF_DESAP</name>